<keyword id="KW-1185">Reference proteome</keyword>
<gene>
    <name evidence="3" type="primary">SPDYE15</name>
</gene>
<name>SPD15_HUMAN</name>
<sequence>MGQILGKIMMSHQPQPQEERSPQRSTSGYPLQEVVDDEVLGPSAPGVDPSPPRRSLGWKRKRECLDESDDEPEKELAPEPEETWVAETLCGLKMKAKRRRVSLVLPEYYEAFNRLLEDPVIKRLLAWDKDLRVSDKYLLAMVIAYFSRAGLPSWQYQRIHFFLALYLANDMEEDDEAPKQNIFYFLYEETRSHIPLLSELWFQLCRYMNPRARKNCSQIALFRKYRFHFFCSMRCRAWVSLEELEEIQAYDPEHWVWARDRAHLS</sequence>
<feature type="chain" id="PRO_0000451622" description="Speedy protein E15">
    <location>
        <begin position="1"/>
        <end position="265"/>
    </location>
</feature>
<feature type="region of interest" description="Disordered" evidence="1">
    <location>
        <begin position="1"/>
        <end position="80"/>
    </location>
</feature>
<feature type="compositionally biased region" description="Acidic residues" evidence="1">
    <location>
        <begin position="66"/>
        <end position="80"/>
    </location>
</feature>
<protein>
    <recommendedName>
        <fullName evidence="2">Speedy protein E15</fullName>
    </recommendedName>
</protein>
<evidence type="ECO:0000256" key="1">
    <source>
        <dbReference type="SAM" id="MobiDB-lite"/>
    </source>
</evidence>
<evidence type="ECO:0000305" key="2"/>
<evidence type="ECO:0000312" key="3">
    <source>
        <dbReference type="HGNC" id="HGNC:51511"/>
    </source>
</evidence>
<reference key="1">
    <citation type="journal article" date="2003" name="Nature">
        <title>The DNA sequence of human chromosome 7.</title>
        <authorList>
            <person name="Hillier L.W."/>
            <person name="Fulton R.S."/>
            <person name="Fulton L.A."/>
            <person name="Graves T.A."/>
            <person name="Pepin K.H."/>
            <person name="Wagner-McPherson C."/>
            <person name="Layman D."/>
            <person name="Maas J."/>
            <person name="Jaeger S."/>
            <person name="Walker R."/>
            <person name="Wylie K."/>
            <person name="Sekhon M."/>
            <person name="Becker M.C."/>
            <person name="O'Laughlin M.D."/>
            <person name="Schaller M.E."/>
            <person name="Fewell G.A."/>
            <person name="Delehaunty K.D."/>
            <person name="Miner T.L."/>
            <person name="Nash W.E."/>
            <person name="Cordes M."/>
            <person name="Du H."/>
            <person name="Sun H."/>
            <person name="Edwards J."/>
            <person name="Bradshaw-Cordum H."/>
            <person name="Ali J."/>
            <person name="Andrews S."/>
            <person name="Isak A."/>
            <person name="Vanbrunt A."/>
            <person name="Nguyen C."/>
            <person name="Du F."/>
            <person name="Lamar B."/>
            <person name="Courtney L."/>
            <person name="Kalicki J."/>
            <person name="Ozersky P."/>
            <person name="Bielicki L."/>
            <person name="Scott K."/>
            <person name="Holmes A."/>
            <person name="Harkins R."/>
            <person name="Harris A."/>
            <person name="Strong C.M."/>
            <person name="Hou S."/>
            <person name="Tomlinson C."/>
            <person name="Dauphin-Kohlberg S."/>
            <person name="Kozlowicz-Reilly A."/>
            <person name="Leonard S."/>
            <person name="Rohlfing T."/>
            <person name="Rock S.M."/>
            <person name="Tin-Wollam A.-M."/>
            <person name="Abbott A."/>
            <person name="Minx P."/>
            <person name="Maupin R."/>
            <person name="Strowmatt C."/>
            <person name="Latreille P."/>
            <person name="Miller N."/>
            <person name="Johnson D."/>
            <person name="Murray J."/>
            <person name="Woessner J.P."/>
            <person name="Wendl M.C."/>
            <person name="Yang S.-P."/>
            <person name="Schultz B.R."/>
            <person name="Wallis J.W."/>
            <person name="Spieth J."/>
            <person name="Bieri T.A."/>
            <person name="Nelson J.O."/>
            <person name="Berkowicz N."/>
            <person name="Wohldmann P.E."/>
            <person name="Cook L.L."/>
            <person name="Hickenbotham M.T."/>
            <person name="Eldred J."/>
            <person name="Williams D."/>
            <person name="Bedell J.A."/>
            <person name="Mardis E.R."/>
            <person name="Clifton S.W."/>
            <person name="Chissoe S.L."/>
            <person name="Marra M.A."/>
            <person name="Raymond C."/>
            <person name="Haugen E."/>
            <person name="Gillett W."/>
            <person name="Zhou Y."/>
            <person name="James R."/>
            <person name="Phelps K."/>
            <person name="Iadanoto S."/>
            <person name="Bubb K."/>
            <person name="Simms E."/>
            <person name="Levy R."/>
            <person name="Clendenning J."/>
            <person name="Kaul R."/>
            <person name="Kent W.J."/>
            <person name="Furey T.S."/>
            <person name="Baertsch R.A."/>
            <person name="Brent M.R."/>
            <person name="Keibler E."/>
            <person name="Flicek P."/>
            <person name="Bork P."/>
            <person name="Suyama M."/>
            <person name="Bailey J.A."/>
            <person name="Portnoy M.E."/>
            <person name="Torrents D."/>
            <person name="Chinwalla A.T."/>
            <person name="Gish W.R."/>
            <person name="Eddy S.R."/>
            <person name="McPherson J.D."/>
            <person name="Olson M.V."/>
            <person name="Eichler E.E."/>
            <person name="Green E.D."/>
            <person name="Waterston R.H."/>
            <person name="Wilson R.K."/>
        </authorList>
    </citation>
    <scope>NUCLEOTIDE SEQUENCE [LARGE SCALE GENOMIC DNA]</scope>
</reference>
<accession>P0DUD4</accession>
<organism>
    <name type="scientific">Homo sapiens</name>
    <name type="common">Human</name>
    <dbReference type="NCBI Taxonomy" id="9606"/>
    <lineage>
        <taxon>Eukaryota</taxon>
        <taxon>Metazoa</taxon>
        <taxon>Chordata</taxon>
        <taxon>Craniata</taxon>
        <taxon>Vertebrata</taxon>
        <taxon>Euteleostomi</taxon>
        <taxon>Mammalia</taxon>
        <taxon>Eutheria</taxon>
        <taxon>Euarchontoglires</taxon>
        <taxon>Primates</taxon>
        <taxon>Haplorrhini</taxon>
        <taxon>Catarrhini</taxon>
        <taxon>Hominidae</taxon>
        <taxon>Homo</taxon>
    </lineage>
</organism>
<proteinExistence type="inferred from homology"/>
<dbReference type="EMBL" id="AC211486">
    <property type="status" value="NOT_ANNOTATED_CDS"/>
    <property type="molecule type" value="Genomic_DNA"/>
</dbReference>
<dbReference type="CCDS" id="CCDS94127.1"/>
<dbReference type="RefSeq" id="NP_001369476.1">
    <property type="nucleotide sequence ID" value="NM_001382547.2"/>
</dbReference>
<dbReference type="RefSeq" id="XP_047275734.1">
    <property type="nucleotide sequence ID" value="XM_047419778.1"/>
</dbReference>
<dbReference type="SMR" id="P0DUD4"/>
<dbReference type="MassIVE" id="P0DUD4"/>
<dbReference type="Ensembl" id="ENST00000612377.3">
    <property type="protein sequence ID" value="ENSP00000499200.1"/>
    <property type="gene ID" value="ENSG00000286014.2"/>
</dbReference>
<dbReference type="GeneID" id="105180391"/>
<dbReference type="MANE-Select" id="ENST00000612377.3">
    <property type="protein sequence ID" value="ENSP00000499200.1"/>
    <property type="RefSeq nucleotide sequence ID" value="NM_001382547.2"/>
    <property type="RefSeq protein sequence ID" value="NP_001369476.1"/>
</dbReference>
<dbReference type="AGR" id="HGNC:51511"/>
<dbReference type="GeneCards" id="SPDYE15"/>
<dbReference type="HGNC" id="HGNC:51511">
    <property type="gene designation" value="SPDYE15"/>
</dbReference>
<dbReference type="HPA" id="ENSG00000286014">
    <property type="expression patterns" value="Not detected"/>
</dbReference>
<dbReference type="neXtProt" id="NX_P0DUD4"/>
<dbReference type="GeneTree" id="ENSGT00940000154173"/>
<dbReference type="InParanoid" id="P0DUD4"/>
<dbReference type="OMA" id="WENKLTI"/>
<dbReference type="OrthoDB" id="9442170at2759"/>
<dbReference type="Proteomes" id="UP000005640">
    <property type="component" value="Chromosome 7"/>
</dbReference>
<dbReference type="GO" id="GO:0019901">
    <property type="term" value="F:protein kinase binding"/>
    <property type="evidence" value="ECO:0000318"/>
    <property type="project" value="GO_Central"/>
</dbReference>
<dbReference type="InterPro" id="IPR020984">
    <property type="entry name" value="Speedy"/>
</dbReference>
<dbReference type="PANTHER" id="PTHR31156">
    <property type="entry name" value="WBSCR19-LIKE PROTEIN"/>
    <property type="match status" value="1"/>
</dbReference>
<dbReference type="Pfam" id="PF11357">
    <property type="entry name" value="Spy1"/>
    <property type="match status" value="1"/>
</dbReference>
<comment type="similarity">
    <text evidence="2">Belongs to the Speedy/Ringo family.</text>
</comment>